<gene>
    <name type="primary">MT-CO3</name>
    <name type="synonym">COIII</name>
    <name type="synonym">COXIII</name>
    <name type="synonym">MTCO3</name>
</gene>
<comment type="function">
    <text evidence="2">Component of the cytochrome c oxidase, the last enzyme in the mitochondrial electron transport chain which drives oxidative phosphorylation. The respiratory chain contains 3 multisubunit complexes succinate dehydrogenase (complex II, CII), ubiquinol-cytochrome c oxidoreductase (cytochrome b-c1 complex, complex III, CIII) and cytochrome c oxidase (complex IV, CIV), that cooperate to transfer electrons derived from NADH and succinate to molecular oxygen, creating an electrochemical gradient over the inner membrane that drives transmembrane transport and the ATP synthase. Cytochrome c oxidase is the component of the respiratory chain that catalyzes the reduction of oxygen to water. Electrons originating from reduced cytochrome c in the intermembrane space (IMS) are transferred via the dinuclear copper A center (CU(A)) of subunit 2 and heme A of subunit 1 to the active site in subunit 1, a binuclear center (BNC) formed by heme A3 and copper B (CU(B)). The BNC reduces molecular oxygen to 2 water molecules using 4 electrons from cytochrome c in the IMS and 4 protons from the mitochondrial matrix.</text>
</comment>
<comment type="catalytic activity">
    <reaction evidence="2">
        <text>4 Fe(II)-[cytochrome c] + O2 + 8 H(+)(in) = 4 Fe(III)-[cytochrome c] + 2 H2O + 4 H(+)(out)</text>
        <dbReference type="Rhea" id="RHEA:11436"/>
        <dbReference type="Rhea" id="RHEA-COMP:10350"/>
        <dbReference type="Rhea" id="RHEA-COMP:14399"/>
        <dbReference type="ChEBI" id="CHEBI:15377"/>
        <dbReference type="ChEBI" id="CHEBI:15378"/>
        <dbReference type="ChEBI" id="CHEBI:15379"/>
        <dbReference type="ChEBI" id="CHEBI:29033"/>
        <dbReference type="ChEBI" id="CHEBI:29034"/>
        <dbReference type="EC" id="7.1.1.9"/>
    </reaction>
    <physiologicalReaction direction="left-to-right" evidence="2">
        <dbReference type="Rhea" id="RHEA:11437"/>
    </physiologicalReaction>
</comment>
<comment type="subunit">
    <text evidence="1">Component of the cytochrome c oxidase (complex IV, CIV), a multisubunit enzyme composed of 14 subunits. The complex is composed of a catalytic core of 3 subunits MT-CO1, MT-CO2 and MT-CO3, encoded in the mitochondrial DNA, and 11 supernumerary subunits COX4I, COX5A, COX5B, COX6A, COX6B, COX6C, COX7A, COX7B, COX7C, COX8 and NDUFA4, which are encoded in the nuclear genome. The complex exists as a monomer or a dimer and forms supercomplexes (SCs) in the inner mitochondrial membrane with NADH-ubiquinone oxidoreductase (complex I, CI) and ubiquinol-cytochrome c oxidoreductase (cytochrome b-c1 complex, complex III, CIII), resulting in different assemblies (supercomplex SCI(1)III(2)IV(1) and megacomplex MCI(2)III(2)IV(2)).</text>
</comment>
<comment type="subcellular location">
    <subcellularLocation>
        <location evidence="1">Mitochondrion inner membrane</location>
        <topology evidence="1">Multi-pass membrane protein</topology>
    </subcellularLocation>
</comment>
<comment type="similarity">
    <text evidence="3">Belongs to the cytochrome c oxidase subunit 3 family.</text>
</comment>
<feature type="chain" id="PRO_0000183765" description="Cytochrome c oxidase subunit 3">
    <location>
        <begin position="1"/>
        <end position="281"/>
    </location>
</feature>
<feature type="topological domain" description="Mitochondrial matrix" evidence="1">
    <location>
        <begin position="1"/>
        <end position="15"/>
    </location>
</feature>
<feature type="transmembrane region" description="Helical; Name=I" evidence="1">
    <location>
        <begin position="16"/>
        <end position="34"/>
    </location>
</feature>
<feature type="topological domain" description="Mitochondrial intermembrane" evidence="1">
    <location>
        <begin position="35"/>
        <end position="40"/>
    </location>
</feature>
<feature type="transmembrane region" description="Helical; Name=II" evidence="1">
    <location>
        <begin position="41"/>
        <end position="66"/>
    </location>
</feature>
<feature type="topological domain" description="Mitochondrial matrix" evidence="1">
    <location>
        <begin position="67"/>
        <end position="72"/>
    </location>
</feature>
<feature type="transmembrane region" description="Helical; Name=III" evidence="1">
    <location>
        <begin position="73"/>
        <end position="105"/>
    </location>
</feature>
<feature type="topological domain" description="Mitochondrial intermembrane" evidence="1">
    <location>
        <begin position="106"/>
        <end position="128"/>
    </location>
</feature>
<feature type="transmembrane region" description="Helical; Name=IV" evidence="1">
    <location>
        <begin position="129"/>
        <end position="152"/>
    </location>
</feature>
<feature type="topological domain" description="Mitochondrial matrix" evidence="1">
    <location>
        <begin position="153"/>
        <end position="155"/>
    </location>
</feature>
<feature type="transmembrane region" description="Helical; Name=V" evidence="1">
    <location>
        <begin position="156"/>
        <end position="183"/>
    </location>
</feature>
<feature type="topological domain" description="Mitochondrial intermembrane" evidence="1">
    <location>
        <begin position="184"/>
        <end position="190"/>
    </location>
</feature>
<feature type="transmembrane region" description="Helical; Name=VI" evidence="1">
    <location>
        <begin position="191"/>
        <end position="223"/>
    </location>
</feature>
<feature type="topological domain" description="Mitochondrial matrix" evidence="1">
    <location>
        <begin position="224"/>
        <end position="232"/>
    </location>
</feature>
<feature type="transmembrane region" description="Helical; Name=VII" evidence="1">
    <location>
        <begin position="233"/>
        <end position="256"/>
    </location>
</feature>
<feature type="topological domain" description="Mitochondrial intermembrane" evidence="1">
    <location>
        <begin position="257"/>
        <end position="281"/>
    </location>
</feature>
<geneLocation type="mitochondrion"/>
<keyword id="KW-0472">Membrane</keyword>
<keyword id="KW-0496">Mitochondrion</keyword>
<keyword id="KW-0999">Mitochondrion inner membrane</keyword>
<keyword id="KW-1278">Translocase</keyword>
<keyword id="KW-0812">Transmembrane</keyword>
<keyword id="KW-1133">Transmembrane helix</keyword>
<proteinExistence type="inferred from homology"/>
<protein>
    <recommendedName>
        <fullName>Cytochrome c oxidase subunit 3</fullName>
        <ecNumber>7.1.1.9</ecNumber>
    </recommendedName>
    <alternativeName>
        <fullName>Cytochrome c oxidase polypeptide III</fullName>
    </alternativeName>
</protein>
<reference key="1">
    <citation type="journal article" date="1994" name="Genetics">
        <title>The marsupial mitochondrial genome and the evolution of placental mammals.</title>
        <authorList>
            <person name="Janke A."/>
            <person name="Feldmaier-Fuchs G."/>
            <person name="Thomas K."/>
            <person name="von Haeseler A."/>
            <person name="Paabo S."/>
        </authorList>
    </citation>
    <scope>NUCLEOTIDE SEQUENCE [GENOMIC DNA]</scope>
    <source>
        <tissue>Liver</tissue>
    </source>
</reference>
<accession>P41312</accession>
<evidence type="ECO:0000250" key="1">
    <source>
        <dbReference type="UniProtKB" id="P00415"/>
    </source>
</evidence>
<evidence type="ECO:0000250" key="2">
    <source>
        <dbReference type="UniProtKB" id="P00420"/>
    </source>
</evidence>
<evidence type="ECO:0000305" key="3"/>
<name>COX3_DIDVI</name>
<organism>
    <name type="scientific">Didelphis virginiana</name>
    <name type="common">North American opossum</name>
    <name type="synonym">Didelphis marsupialis virginiana</name>
    <dbReference type="NCBI Taxonomy" id="9267"/>
    <lineage>
        <taxon>Eukaryota</taxon>
        <taxon>Metazoa</taxon>
        <taxon>Chordata</taxon>
        <taxon>Craniata</taxon>
        <taxon>Vertebrata</taxon>
        <taxon>Euteleostomi</taxon>
        <taxon>Mammalia</taxon>
        <taxon>Metatheria</taxon>
        <taxon>Didelphimorphia</taxon>
        <taxon>Didelphidae</taxon>
        <taxon>Didelphis</taxon>
    </lineage>
</organism>
<dbReference type="EC" id="7.1.1.9"/>
<dbReference type="EMBL" id="Z29573">
    <property type="protein sequence ID" value="CAA82683.1"/>
    <property type="molecule type" value="Genomic_DNA"/>
</dbReference>
<dbReference type="PIR" id="S47876">
    <property type="entry name" value="S47876"/>
</dbReference>
<dbReference type="SMR" id="P41312"/>
<dbReference type="CTD" id="4514"/>
<dbReference type="GO" id="GO:0005743">
    <property type="term" value="C:mitochondrial inner membrane"/>
    <property type="evidence" value="ECO:0007669"/>
    <property type="project" value="UniProtKB-SubCell"/>
</dbReference>
<dbReference type="GO" id="GO:0045277">
    <property type="term" value="C:respiratory chain complex IV"/>
    <property type="evidence" value="ECO:0000250"/>
    <property type="project" value="UniProtKB"/>
</dbReference>
<dbReference type="GO" id="GO:0004129">
    <property type="term" value="F:cytochrome-c oxidase activity"/>
    <property type="evidence" value="ECO:0007669"/>
    <property type="project" value="UniProtKB-EC"/>
</dbReference>
<dbReference type="GO" id="GO:0006123">
    <property type="term" value="P:mitochondrial electron transport, cytochrome c to oxygen"/>
    <property type="evidence" value="ECO:0007669"/>
    <property type="project" value="TreeGrafter"/>
</dbReference>
<dbReference type="GO" id="GO:0008535">
    <property type="term" value="P:respiratory chain complex IV assembly"/>
    <property type="evidence" value="ECO:0000250"/>
    <property type="project" value="UniProtKB"/>
</dbReference>
<dbReference type="CDD" id="cd01665">
    <property type="entry name" value="Cyt_c_Oxidase_III"/>
    <property type="match status" value="1"/>
</dbReference>
<dbReference type="FunFam" id="1.10.287.70:FF:000048">
    <property type="entry name" value="Cytochrome c oxidase subunit 3"/>
    <property type="match status" value="1"/>
</dbReference>
<dbReference type="FunFam" id="1.20.120.80:FF:000002">
    <property type="entry name" value="Cytochrome c oxidase subunit 3"/>
    <property type="match status" value="1"/>
</dbReference>
<dbReference type="Gene3D" id="1.10.287.70">
    <property type="match status" value="1"/>
</dbReference>
<dbReference type="Gene3D" id="1.20.120.80">
    <property type="entry name" value="Cytochrome c oxidase, subunit III, four-helix bundle"/>
    <property type="match status" value="1"/>
</dbReference>
<dbReference type="InterPro" id="IPR024791">
    <property type="entry name" value="Cyt_c/ubiquinol_Oxase_su3"/>
</dbReference>
<dbReference type="InterPro" id="IPR033945">
    <property type="entry name" value="Cyt_c_oxase_su3_dom"/>
</dbReference>
<dbReference type="InterPro" id="IPR000298">
    <property type="entry name" value="Cyt_c_oxidase-like_su3"/>
</dbReference>
<dbReference type="InterPro" id="IPR035973">
    <property type="entry name" value="Cyt_c_oxidase_su3-like_sf"/>
</dbReference>
<dbReference type="InterPro" id="IPR013833">
    <property type="entry name" value="Cyt_c_oxidase_su3_a-hlx"/>
</dbReference>
<dbReference type="PANTHER" id="PTHR11403:SF7">
    <property type="entry name" value="CYTOCHROME C OXIDASE SUBUNIT 3"/>
    <property type="match status" value="1"/>
</dbReference>
<dbReference type="PANTHER" id="PTHR11403">
    <property type="entry name" value="CYTOCHROME C OXIDASE SUBUNIT III"/>
    <property type="match status" value="1"/>
</dbReference>
<dbReference type="Pfam" id="PF00510">
    <property type="entry name" value="COX3"/>
    <property type="match status" value="1"/>
</dbReference>
<dbReference type="SUPFAM" id="SSF81452">
    <property type="entry name" value="Cytochrome c oxidase subunit III-like"/>
    <property type="match status" value="1"/>
</dbReference>
<dbReference type="PROSITE" id="PS50253">
    <property type="entry name" value="COX3"/>
    <property type="match status" value="1"/>
</dbReference>
<sequence length="281" mass="32135">MTHQTHAYHMVNPSPWPLTGALSALLLTSGLIMWFHYNSSTLMFMGLTTMLLTMYQWWRDIIREGTFQGHHTPVVQKGLRYGMILFILSEVFFFIGFFWAFYHSSLAPTPELGGCWPPTGIHPLNPLEVPLLNTSILLASGVSITWAHHSLMEGNRKQMIQALLITISLGLYFTILQAMEYYEASFTISDGVYGSTFFVATGFHGLHVIIGSTFLIVCLLRQLFYHFTSTHHFGFEAAAWYWHFVDVVWLFLYVSIYWWGSYFSSMISTTDFQSLSSGSNQ</sequence>